<accession>P54281</accession>
<organism>
    <name type="scientific">Bos taurus</name>
    <name type="common">Bovine</name>
    <dbReference type="NCBI Taxonomy" id="9913"/>
    <lineage>
        <taxon>Eukaryota</taxon>
        <taxon>Metazoa</taxon>
        <taxon>Chordata</taxon>
        <taxon>Craniata</taxon>
        <taxon>Vertebrata</taxon>
        <taxon>Euteleostomi</taxon>
        <taxon>Mammalia</taxon>
        <taxon>Eutheria</taxon>
        <taxon>Laurasiatheria</taxon>
        <taxon>Artiodactyla</taxon>
        <taxon>Ruminantia</taxon>
        <taxon>Pecora</taxon>
        <taxon>Bovidae</taxon>
        <taxon>Bovinae</taxon>
        <taxon>Bos</taxon>
    </lineage>
</organism>
<comment type="function">
    <text evidence="1 4">May be involved in mediating calcium-activated chloride conductance (PubMed:8537359). May play critical roles in goblet cell metaplasia, mucus hypersecretion, cystic fibrosis and AHR. May be involved in the regulation of mucus production and/or secretion by goblet cells. Involved in the regulation of tissue inflammation in the innate immune response. May play a role as a tumor suppressor. Induces MUC5AC.</text>
</comment>
<comment type="subcellular location">
    <subcellularLocation>
        <location evidence="4">Apical cell membrane</location>
        <topology evidence="2">Single-pass membrane protein</topology>
    </subcellularLocation>
</comment>
<comment type="tissue specificity">
    <text evidence="4">Trachea.</text>
</comment>
<comment type="domain">
    <text evidence="1">The metalloprotease region is responsible for autoproteolytic processing. It can also cross-cleave other CLCA substrates.</text>
</comment>
<comment type="PTM">
    <text evidence="4">Glycosylated.</text>
</comment>
<comment type="PTM">
    <text evidence="1">The 125-kDa product is autoproteolytically processed by the metalloprotease domain and yields to two cell-surface-associated subunits, a 90-kDa protein and a group of 37- to 41-kDa proteins. The cleavage is necessary for calcium-activated chloride channel (CaCC) activation activity.</text>
</comment>
<comment type="similarity">
    <text evidence="6">Belongs to the CLCR family.</text>
</comment>
<comment type="caution">
    <text evidence="4 6">Was initially characterized as chloride channel, but such a function is difficult to reconcile with the single predicted transmembrane region. Other family members have been shown to stimulate channel activity.</text>
</comment>
<evidence type="ECO:0000250" key="1">
    <source>
        <dbReference type="UniProtKB" id="A8K7I4"/>
    </source>
</evidence>
<evidence type="ECO:0000255" key="2"/>
<evidence type="ECO:0000255" key="3">
    <source>
        <dbReference type="PROSITE-ProRule" id="PRU00219"/>
    </source>
</evidence>
<evidence type="ECO:0000269" key="4">
    <source>
    </source>
</evidence>
<evidence type="ECO:0000303" key="5">
    <source>
    </source>
</evidence>
<evidence type="ECO:0000305" key="6"/>
<protein>
    <recommendedName>
        <fullName evidence="6">Calcium-activated chloride channel regulator 1</fullName>
        <ecNumber evidence="1">3.4.-.-</ecNumber>
    </recommendedName>
    <alternativeName>
        <fullName>Calcium-activated chloride channel</fullName>
    </alternativeName>
    <alternativeName>
        <fullName evidence="5">Epithelial chloride channel protein</fullName>
    </alternativeName>
</protein>
<name>CLCA1_BOVIN</name>
<feature type="signal peptide" evidence="2">
    <location>
        <begin position="1"/>
        <end position="21"/>
    </location>
</feature>
<feature type="chain" id="PRO_0000054105" description="Calcium-activated chloride channel regulator 1">
    <location>
        <begin position="22"/>
        <end position="903"/>
    </location>
</feature>
<feature type="transmembrane region" description="Helical" evidence="2">
    <location>
        <begin position="883"/>
        <end position="903"/>
    </location>
</feature>
<feature type="domain" description="VWFA" evidence="3">
    <location>
        <begin position="308"/>
        <end position="476"/>
    </location>
</feature>
<feature type="region of interest" description="Metalloprotease domain" evidence="1">
    <location>
        <begin position="45"/>
        <end position="199"/>
    </location>
</feature>
<feature type="active site" evidence="1">
    <location>
        <position position="156"/>
    </location>
</feature>
<feature type="binding site" evidence="1">
    <location>
        <position position="155"/>
    </location>
    <ligand>
        <name>Zn(2+)</name>
        <dbReference type="ChEBI" id="CHEBI:29105"/>
        <note>catalytic</note>
    </ligand>
</feature>
<feature type="binding site" evidence="1">
    <location>
        <position position="159"/>
    </location>
    <ligand>
        <name>Zn(2+)</name>
        <dbReference type="ChEBI" id="CHEBI:29105"/>
        <note>catalytic</note>
    </ligand>
</feature>
<feature type="binding site" evidence="1">
    <location>
        <position position="166"/>
    </location>
    <ligand>
        <name>Zn(2+)</name>
        <dbReference type="ChEBI" id="CHEBI:29105"/>
        <note>catalytic</note>
    </ligand>
</feature>
<feature type="glycosylation site" description="N-linked (GlcNAc...) asparagine" evidence="2">
    <location>
        <position position="360"/>
    </location>
</feature>
<feature type="glycosylation site" description="N-linked (GlcNAc...) asparagine" evidence="2">
    <location>
        <position position="372"/>
    </location>
</feature>
<feature type="glycosylation site" description="N-linked (GlcNAc...) asparagine" evidence="2">
    <location>
        <position position="504"/>
    </location>
</feature>
<feature type="glycosylation site" description="N-linked (GlcNAc...) asparagine" evidence="2">
    <location>
        <position position="842"/>
    </location>
</feature>
<proteinExistence type="evidence at protein level"/>
<reference key="1">
    <citation type="journal article" date="1995" name="J. Biol. Chem.">
        <title>Cloning of an epithelial chloride channel from bovine trachea.</title>
        <authorList>
            <person name="Cunningham S.A."/>
            <person name="Awayda M.S."/>
            <person name="Bubien J.K."/>
            <person name="Ismailov I.I."/>
            <person name="Arrate M.P."/>
            <person name="Berdiev B.K."/>
            <person name="Benos D.J."/>
            <person name="Fuller C.M."/>
        </authorList>
    </citation>
    <scope>NUCLEOTIDE SEQUENCE [MRNA]</scope>
    <scope>FUNCTION</scope>
    <scope>SUBCELLULAR LOCATION</scope>
    <scope>TISSUE SPECIFICITY</scope>
    <scope>GLYCOSYLATION</scope>
    <source>
        <tissue>Trachea</tissue>
    </source>
</reference>
<dbReference type="EC" id="3.4.-.-" evidence="1"/>
<dbReference type="EMBL" id="U36445">
    <property type="protein sequence ID" value="AAC48511.1"/>
    <property type="molecule type" value="mRNA"/>
</dbReference>
<dbReference type="RefSeq" id="NP_001229512.1">
    <property type="nucleotide sequence ID" value="NM_001242583.1"/>
</dbReference>
<dbReference type="SMR" id="P54281"/>
<dbReference type="FunCoup" id="P54281">
    <property type="interactions" value="11"/>
</dbReference>
<dbReference type="STRING" id="9913.ENSBTAP00000028657"/>
<dbReference type="MEROPS" id="M87.005"/>
<dbReference type="TCDB" id="1.A.13.1.1">
    <property type="family name" value="the epithelial chloride channel (e-clc) family"/>
</dbReference>
<dbReference type="GlyGen" id="P54281">
    <property type="glycosylation" value="4 sites"/>
</dbReference>
<dbReference type="PaxDb" id="9913-ENSBTAP00000028657"/>
<dbReference type="GeneID" id="784768"/>
<dbReference type="KEGG" id="bta:784768"/>
<dbReference type="eggNOG" id="ENOG502QRRD">
    <property type="taxonomic scope" value="Eukaryota"/>
</dbReference>
<dbReference type="InParanoid" id="P54281"/>
<dbReference type="OrthoDB" id="687730at2759"/>
<dbReference type="Proteomes" id="UP000009136">
    <property type="component" value="Unplaced"/>
</dbReference>
<dbReference type="GO" id="GO:0016324">
    <property type="term" value="C:apical plasma membrane"/>
    <property type="evidence" value="ECO:0007669"/>
    <property type="project" value="UniProtKB-SubCell"/>
</dbReference>
<dbReference type="GO" id="GO:0005886">
    <property type="term" value="C:plasma membrane"/>
    <property type="evidence" value="ECO:0000318"/>
    <property type="project" value="GO_Central"/>
</dbReference>
<dbReference type="GO" id="GO:0005229">
    <property type="term" value="F:intracellularly calcium-gated chloride channel activity"/>
    <property type="evidence" value="ECO:0000318"/>
    <property type="project" value="GO_Central"/>
</dbReference>
<dbReference type="GO" id="GO:0046872">
    <property type="term" value="F:metal ion binding"/>
    <property type="evidence" value="ECO:0007669"/>
    <property type="project" value="UniProtKB-KW"/>
</dbReference>
<dbReference type="GO" id="GO:0008237">
    <property type="term" value="F:metallopeptidase activity"/>
    <property type="evidence" value="ECO:0007669"/>
    <property type="project" value="UniProtKB-KW"/>
</dbReference>
<dbReference type="GO" id="GO:0006816">
    <property type="term" value="P:calcium ion transport"/>
    <property type="evidence" value="ECO:0007669"/>
    <property type="project" value="UniProtKB-KW"/>
</dbReference>
<dbReference type="GO" id="GO:0006508">
    <property type="term" value="P:proteolysis"/>
    <property type="evidence" value="ECO:0007669"/>
    <property type="project" value="UniProtKB-KW"/>
</dbReference>
<dbReference type="CDD" id="cd00198">
    <property type="entry name" value="vWFA"/>
    <property type="match status" value="1"/>
</dbReference>
<dbReference type="FunFam" id="2.60.40.10:FF:001134">
    <property type="entry name" value="Calcium-activated chloride channel regulator 1"/>
    <property type="match status" value="1"/>
</dbReference>
<dbReference type="FunFam" id="3.40.50.410:FF:000034">
    <property type="entry name" value="calcium-activated chloride channel regulator 1"/>
    <property type="match status" value="1"/>
</dbReference>
<dbReference type="Gene3D" id="2.60.40.10">
    <property type="entry name" value="Immunoglobulins"/>
    <property type="match status" value="1"/>
</dbReference>
<dbReference type="Gene3D" id="3.40.50.410">
    <property type="entry name" value="von Willebrand factor, type A domain"/>
    <property type="match status" value="1"/>
</dbReference>
<dbReference type="InterPro" id="IPR004727">
    <property type="entry name" value="CLCA_chordata"/>
</dbReference>
<dbReference type="InterPro" id="IPR013642">
    <property type="entry name" value="CLCA_N"/>
</dbReference>
<dbReference type="InterPro" id="IPR051266">
    <property type="entry name" value="CLCR"/>
</dbReference>
<dbReference type="InterPro" id="IPR013783">
    <property type="entry name" value="Ig-like_fold"/>
</dbReference>
<dbReference type="InterPro" id="IPR002035">
    <property type="entry name" value="VWF_A"/>
</dbReference>
<dbReference type="InterPro" id="IPR036465">
    <property type="entry name" value="vWFA_dom_sf"/>
</dbReference>
<dbReference type="NCBIfam" id="NF041940">
    <property type="entry name" value="choice_anch_X"/>
    <property type="match status" value="1"/>
</dbReference>
<dbReference type="NCBIfam" id="TIGR00868">
    <property type="entry name" value="hCaCC"/>
    <property type="match status" value="1"/>
</dbReference>
<dbReference type="PANTHER" id="PTHR10579">
    <property type="entry name" value="CALCIUM-ACTIVATED CHLORIDE CHANNEL REGULATOR"/>
    <property type="match status" value="1"/>
</dbReference>
<dbReference type="PANTHER" id="PTHR10579:SF42">
    <property type="entry name" value="CHLORIDE CHANNEL ACCESSORY 3B"/>
    <property type="match status" value="1"/>
</dbReference>
<dbReference type="Pfam" id="PF08434">
    <property type="entry name" value="CLCA"/>
    <property type="match status" value="1"/>
</dbReference>
<dbReference type="Pfam" id="PF00092">
    <property type="entry name" value="VWA"/>
    <property type="match status" value="1"/>
</dbReference>
<dbReference type="SMART" id="SM00327">
    <property type="entry name" value="VWA"/>
    <property type="match status" value="1"/>
</dbReference>
<dbReference type="SUPFAM" id="SSF53300">
    <property type="entry name" value="vWA-like"/>
    <property type="match status" value="1"/>
</dbReference>
<dbReference type="PROSITE" id="PS50234">
    <property type="entry name" value="VWFA"/>
    <property type="match status" value="1"/>
</dbReference>
<sequence length="903" mass="100306">MVPRLTVILFLTLHLLPGMKSSMVNLINNGYDGIVIAINPSVPEDEKLIQNIKEMVTEASTYLFHATKRRVYFRNVSILIPMTWKSKSEYLMPKQESYDQAEVIVANPYLKHGDDPYTLQYGRCGEKGQYIHFTPNFLLTNNLPIYGSRGRAFVHEWAHLRWGIFDEYNGDQPFYISRRNTIEATRCSTHITGTNVIVKCQGGSCITRPCRRDSQTGLYEAKCTFIPEKSQTARESIMFMQSLHSVTEFCTEKTHNVEAPNLQNKMCNGKSTWDVIMNSTDFQNTSPMTEMNPPTQPTFSLLKSKQRVVCLVLDKSGSMSSEDRLFRMNQAAELFLIQIIEKGSLVGMVTFDSVAEIRNNLTKITDDNVYENITANLPQEANGGTSICRGLKAGFQAIIQSQQSTSGSEIILLTDGEDNEIHSCIEEVKQSGVIIHTIALGPSAAKELETLSDMTGGHRFYANKDINGLTNAFSRISSRSGSITQQTIQLESKALAITEKKWVNGTVPVDSTIGNDTFFVVTWTIKKPEILLQDPKGKKYKTSDFKEDKLNIHSARLRIPGIAETGTWTYSLLNNHASPQILTVTVTTRARSPTTPPVTATAHMSQNTAHYPSPVIVYAQVSQGFLPVLGINVTAIIETEDGHQVTLELWDNGAGADTVKNDGIYSRYFTDYRGNGRYSLKVHAEARNNTARLSLRQPQNKALYIPGYIENGKIILNPPRPEVKDDLAKAEIEDFSRLTSGGSFTVSGAPPGNHPSVLPPNKIIDLEAKFKEDHIQLSWTAPANVLDKGKANSYIIRISKSFLDLQKDFDNATLVNTSSLKPKEAGSDENFEFKPEPFRIENGTNFYIAVQAINEANLTSEVSNIAQAIKFIPMPEDSVPALGTKISAINLAIFALAMILSIV</sequence>
<keyword id="KW-0106">Calcium</keyword>
<keyword id="KW-0109">Calcium transport</keyword>
<keyword id="KW-1003">Cell membrane</keyword>
<keyword id="KW-0868">Chloride</keyword>
<keyword id="KW-0325">Glycoprotein</keyword>
<keyword id="KW-0378">Hydrolase</keyword>
<keyword id="KW-0406">Ion transport</keyword>
<keyword id="KW-0472">Membrane</keyword>
<keyword id="KW-0479">Metal-binding</keyword>
<keyword id="KW-0482">Metalloprotease</keyword>
<keyword id="KW-0645">Protease</keyword>
<keyword id="KW-1185">Reference proteome</keyword>
<keyword id="KW-0732">Signal</keyword>
<keyword id="KW-0812">Transmembrane</keyword>
<keyword id="KW-1133">Transmembrane helix</keyword>
<keyword id="KW-0813">Transport</keyword>
<keyword id="KW-0862">Zinc</keyword>